<organism>
    <name type="scientific">Antheraea polyphemus</name>
    <name type="common">Polyphemus moth</name>
    <dbReference type="NCBI Taxonomy" id="7120"/>
    <lineage>
        <taxon>Eukaryota</taxon>
        <taxon>Metazoa</taxon>
        <taxon>Ecdysozoa</taxon>
        <taxon>Arthropoda</taxon>
        <taxon>Hexapoda</taxon>
        <taxon>Insecta</taxon>
        <taxon>Pterygota</taxon>
        <taxon>Neoptera</taxon>
        <taxon>Endopterygota</taxon>
        <taxon>Lepidoptera</taxon>
        <taxon>Glossata</taxon>
        <taxon>Ditrysia</taxon>
        <taxon>Bombycoidea</taxon>
        <taxon>Saturniidae</taxon>
        <taxon>Saturniinae</taxon>
        <taxon>Saturniini</taxon>
        <taxon>Antheraea</taxon>
    </lineage>
</organism>
<dbReference type="EMBL" id="J01160">
    <property type="protein sequence ID" value="AAA27787.1"/>
    <property type="molecule type" value="mRNA"/>
</dbReference>
<dbReference type="GO" id="GO:0042600">
    <property type="term" value="C:egg chorion"/>
    <property type="evidence" value="ECO:0007669"/>
    <property type="project" value="InterPro"/>
</dbReference>
<dbReference type="GO" id="GO:0005213">
    <property type="term" value="F:structural constituent of egg chorion"/>
    <property type="evidence" value="ECO:0007669"/>
    <property type="project" value="InterPro"/>
</dbReference>
<dbReference type="GO" id="GO:0007304">
    <property type="term" value="P:chorion-containing eggshell formation"/>
    <property type="evidence" value="ECO:0007669"/>
    <property type="project" value="InterPro"/>
</dbReference>
<dbReference type="InterPro" id="IPR002635">
    <property type="entry name" value="Chorion"/>
</dbReference>
<dbReference type="Pfam" id="PF01723">
    <property type="entry name" value="Chorion_1"/>
    <property type="match status" value="1"/>
</dbReference>
<reference key="1">
    <citation type="journal article" date="1983" name="Proc. Natl. Acad. Sci. U.S.A.">
        <title>Silkmoth chorion multigene families constitute a superfamily: comparison of C and B family sequences.</title>
        <authorList>
            <person name="Regier J.C."/>
            <person name="Kafatos F.C."/>
            <person name="Hamodrakas S.J."/>
        </authorList>
    </citation>
    <scope>NUCLEOTIDE SEQUENCE [MRNA]</scope>
</reference>
<protein>
    <recommendedName>
        <fullName>Chorion class CB protein PC404</fullName>
    </recommendedName>
</protein>
<name>CHCB2_ANTPO</name>
<feature type="chain" id="PRO_0000168185" description="Chorion class CB protein PC404">
    <location>
        <begin position="1" status="less than"/>
        <end position="167" status="greater than"/>
    </location>
</feature>
<feature type="region of interest" description="Left arm">
    <location>
        <begin position="1" status="less than"/>
        <end position="55"/>
    </location>
</feature>
<feature type="region of interest" description="Central domain">
    <location>
        <begin position="56"/>
        <end position="126"/>
    </location>
</feature>
<feature type="region of interest" description="Right arm">
    <location>
        <begin position="127"/>
        <end position="167" status="greater than"/>
    </location>
</feature>
<feature type="non-terminal residue">
    <location>
        <position position="1"/>
    </location>
</feature>
<feature type="non-terminal residue">
    <location>
        <position position="167"/>
    </location>
</feature>
<keyword id="KW-0677">Repeat</keyword>
<proteinExistence type="evidence at transcript level"/>
<sequence>IGREAIVGAGLQGPFGGPWPYDALSPFDMPYGPALPAMSCGAGSFGPSSGFAPAAAYGGGLAVTSSSPISPTGLSVTSENTIEGVVAVTGQLPFLGAVVTDGIFPTVGAGDVWYGCGDGAVGIVAETPFASTSVNPAYGYGGAIGGGVPYNSYGPIGYGGCGYNALY</sequence>
<evidence type="ECO:0000305" key="1"/>
<accession>P08930</accession>
<comment type="function">
    <text>This protein is one of many from the eggshell of the silk moth.</text>
</comment>
<comment type="similarity">
    <text evidence="1">Belongs to the chorion protein family.</text>
</comment>